<keyword id="KW-0052">Apoplast</keyword>
<keyword id="KW-1015">Disulfide bond</keyword>
<keyword id="KW-0464">Manganese</keyword>
<keyword id="KW-0479">Metal-binding</keyword>
<keyword id="KW-0964">Secreted</keyword>
<keyword id="KW-0732">Signal</keyword>
<accession>P45852</accession>
<reference key="1">
    <citation type="journal article" date="1992" name="Plant Physiol.">
        <title>Nucleotide sequence of a root-specific transcript encoding a germin-like protein from the halophyte Mesembryanthemum crystallinum.</title>
        <authorList>
            <person name="Michalowski C.B."/>
            <person name="Bohnert H.J."/>
        </authorList>
    </citation>
    <scope>NUCLEOTIDE SEQUENCE [MRNA]</scope>
    <source>
        <tissue>Root</tissue>
    </source>
</reference>
<proteinExistence type="evidence at transcript level"/>
<feature type="signal peptide" evidence="2">
    <location>
        <begin position="1"/>
        <end position="22"/>
    </location>
</feature>
<feature type="chain" id="PRO_0000010837" description="Germin-like protein">
    <location>
        <begin position="23"/>
        <end position="233"/>
    </location>
</feature>
<feature type="domain" description="Cupin type-1" evidence="2">
    <location>
        <begin position="63"/>
        <end position="215"/>
    </location>
</feature>
<feature type="binding site" evidence="1">
    <location>
        <position position="111"/>
    </location>
    <ligand>
        <name>Mn(2+)</name>
        <dbReference type="ChEBI" id="CHEBI:29035"/>
    </ligand>
</feature>
<feature type="binding site" evidence="1">
    <location>
        <position position="113"/>
    </location>
    <ligand>
        <name>Mn(2+)</name>
        <dbReference type="ChEBI" id="CHEBI:29035"/>
    </ligand>
</feature>
<feature type="binding site" evidence="1">
    <location>
        <position position="118"/>
    </location>
    <ligand>
        <name>Mn(2+)</name>
        <dbReference type="ChEBI" id="CHEBI:29035"/>
    </ligand>
</feature>
<feature type="binding site" evidence="1">
    <location>
        <position position="162"/>
    </location>
    <ligand>
        <name>Mn(2+)</name>
        <dbReference type="ChEBI" id="CHEBI:29035"/>
    </ligand>
</feature>
<feature type="disulfide bond" evidence="1">
    <location>
        <begin position="32"/>
        <end position="49"/>
    </location>
</feature>
<sequence>MEAYKMFAFVVLLATTLYQAYATDPTQLQDFCVGVNKPNDGLFVNGLFCKDPMEVNPDDFLFRGLNMPANTDNALGFAATLVTAANLPGLNTLGISVARLDFAPHGLNPPHTHPRATEVFVVLEGTFYVGFVTSNLADGGNKLFAKVLNKGDVFVFPQGLIHFQLNIGNYPGVGISGLSSQNPGVITIANAVFGPEHLSQLMFLLRPSISMRIWSSFFRIGSQVVAATTSMCS</sequence>
<organism>
    <name type="scientific">Mesembryanthemum crystallinum</name>
    <name type="common">Common ice plant</name>
    <name type="synonym">Cryophytum crystallinum</name>
    <dbReference type="NCBI Taxonomy" id="3544"/>
    <lineage>
        <taxon>Eukaryota</taxon>
        <taxon>Viridiplantae</taxon>
        <taxon>Streptophyta</taxon>
        <taxon>Embryophyta</taxon>
        <taxon>Tracheophyta</taxon>
        <taxon>Spermatophyta</taxon>
        <taxon>Magnoliopsida</taxon>
        <taxon>eudicotyledons</taxon>
        <taxon>Gunneridae</taxon>
        <taxon>Pentapetalae</taxon>
        <taxon>Caryophyllales</taxon>
        <taxon>Aizoaceae</taxon>
        <taxon>Mesembryanthemum</taxon>
        <taxon>Mesembryanthemum subgen. Cryophytum</taxon>
    </lineage>
</organism>
<dbReference type="EMBL" id="M93041">
    <property type="protein sequence ID" value="AAA33030.1"/>
    <property type="molecule type" value="mRNA"/>
</dbReference>
<dbReference type="PIR" id="T12426">
    <property type="entry name" value="T12426"/>
</dbReference>
<dbReference type="SMR" id="P45852"/>
<dbReference type="GO" id="GO:0048046">
    <property type="term" value="C:apoplast"/>
    <property type="evidence" value="ECO:0007669"/>
    <property type="project" value="UniProtKB-SubCell"/>
</dbReference>
<dbReference type="GO" id="GO:0030145">
    <property type="term" value="F:manganese ion binding"/>
    <property type="evidence" value="ECO:0007669"/>
    <property type="project" value="InterPro"/>
</dbReference>
<dbReference type="CDD" id="cd02241">
    <property type="entry name" value="cupin_OxOx"/>
    <property type="match status" value="1"/>
</dbReference>
<dbReference type="FunFam" id="2.60.120.10:FF:000005">
    <property type="entry name" value="Germin-like protein subfamily 1 member 8"/>
    <property type="match status" value="1"/>
</dbReference>
<dbReference type="Gene3D" id="2.60.120.10">
    <property type="entry name" value="Jelly Rolls"/>
    <property type="match status" value="1"/>
</dbReference>
<dbReference type="InterPro" id="IPR006045">
    <property type="entry name" value="Cupin_1"/>
</dbReference>
<dbReference type="InterPro" id="IPR001929">
    <property type="entry name" value="Germin"/>
</dbReference>
<dbReference type="InterPro" id="IPR019780">
    <property type="entry name" value="Germin_Mn-BS"/>
</dbReference>
<dbReference type="InterPro" id="IPR014710">
    <property type="entry name" value="RmlC-like_jellyroll"/>
</dbReference>
<dbReference type="InterPro" id="IPR011051">
    <property type="entry name" value="RmlC_Cupin_sf"/>
</dbReference>
<dbReference type="PANTHER" id="PTHR31238">
    <property type="entry name" value="GERMIN-LIKE PROTEIN SUBFAMILY 3 MEMBER 3"/>
    <property type="match status" value="1"/>
</dbReference>
<dbReference type="Pfam" id="PF00190">
    <property type="entry name" value="Cupin_1"/>
    <property type="match status" value="1"/>
</dbReference>
<dbReference type="PRINTS" id="PR00325">
    <property type="entry name" value="GERMIN"/>
</dbReference>
<dbReference type="SMART" id="SM00835">
    <property type="entry name" value="Cupin_1"/>
    <property type="match status" value="1"/>
</dbReference>
<dbReference type="SUPFAM" id="SSF51182">
    <property type="entry name" value="RmlC-like cupins"/>
    <property type="match status" value="1"/>
</dbReference>
<dbReference type="PROSITE" id="PS00725">
    <property type="entry name" value="GERMIN"/>
    <property type="match status" value="1"/>
</dbReference>
<protein>
    <recommendedName>
        <fullName>Germin-like protein</fullName>
    </recommendedName>
</protein>
<name>GLP1_MESCR</name>
<comment type="function">
    <text>May be involved in seed germination.</text>
</comment>
<comment type="subunit">
    <text evidence="1">Oligomer (believed to be a pentamer but probably hexamer).</text>
</comment>
<comment type="subcellular location">
    <subcellularLocation>
        <location evidence="1">Secreted</location>
        <location evidence="1">Extracellular space</location>
        <location evidence="1">Apoplast</location>
    </subcellularLocation>
</comment>
<comment type="tissue specificity">
    <text>Expressed at high levels in unstressed roots.</text>
</comment>
<comment type="similarity">
    <text evidence="3">Belongs to the germin family.</text>
</comment>
<evidence type="ECO:0000250" key="1"/>
<evidence type="ECO:0000255" key="2"/>
<evidence type="ECO:0000305" key="3"/>